<keyword id="KW-1185">Reference proteome</keyword>
<evidence type="ECO:0000305" key="1"/>
<protein>
    <recommendedName>
        <fullName>UPF0329 protein ECU04_1650</fullName>
    </recommendedName>
</protein>
<gene>
    <name type="ordered locus">ECU04_1650</name>
</gene>
<dbReference type="EMBL" id="AL590444">
    <property type="protein sequence ID" value="CAD25354.2"/>
    <property type="molecule type" value="Genomic_DNA"/>
</dbReference>
<dbReference type="RefSeq" id="NP_584850.2">
    <property type="nucleotide sequence ID" value="NM_001041200.2"/>
</dbReference>
<dbReference type="SMR" id="Q8SVP4"/>
<dbReference type="GeneID" id="858998"/>
<dbReference type="KEGG" id="ecu:ECU04_1650"/>
<dbReference type="VEuPathDB" id="MicrosporidiaDB:ECU04_1650"/>
<dbReference type="HOGENOM" id="CLU_2440842_0_0_1"/>
<dbReference type="InParanoid" id="Q8SVP4"/>
<dbReference type="Proteomes" id="UP000000819">
    <property type="component" value="Chromosome IV"/>
</dbReference>
<dbReference type="InterPro" id="IPR022115">
    <property type="entry name" value="DUF3654"/>
</dbReference>
<dbReference type="Pfam" id="PF12376">
    <property type="entry name" value="DUF3654"/>
    <property type="match status" value="1"/>
</dbReference>
<feature type="chain" id="PRO_0000223156" description="UPF0329 protein ECU04_1650">
    <location>
        <begin position="1"/>
        <end position="90"/>
    </location>
</feature>
<organism>
    <name type="scientific">Encephalitozoon cuniculi (strain GB-M1)</name>
    <name type="common">Microsporidian parasite</name>
    <dbReference type="NCBI Taxonomy" id="284813"/>
    <lineage>
        <taxon>Eukaryota</taxon>
        <taxon>Fungi</taxon>
        <taxon>Fungi incertae sedis</taxon>
        <taxon>Microsporidia</taxon>
        <taxon>Unikaryonidae</taxon>
        <taxon>Encephalitozoon</taxon>
    </lineage>
</organism>
<name>Y4G5_ENCCU</name>
<comment type="similarity">
    <text evidence="1">Belongs to the UPF0329 family.</text>
</comment>
<reference key="1">
    <citation type="journal article" date="2001" name="Nature">
        <title>Genome sequence and gene compaction of the eukaryote parasite Encephalitozoon cuniculi.</title>
        <authorList>
            <person name="Katinka M.D."/>
            <person name="Duprat S."/>
            <person name="Cornillot E."/>
            <person name="Metenier G."/>
            <person name="Thomarat F."/>
            <person name="Prensier G."/>
            <person name="Barbe V."/>
            <person name="Peyretaillade E."/>
            <person name="Brottier P."/>
            <person name="Wincker P."/>
            <person name="Delbac F."/>
            <person name="El Alaoui H."/>
            <person name="Peyret P."/>
            <person name="Saurin W."/>
            <person name="Gouy M."/>
            <person name="Weissenbach J."/>
            <person name="Vivares C.P."/>
        </authorList>
    </citation>
    <scope>NUCLEOTIDE SEQUENCE [LARGE SCALE GENOMIC DNA]</scope>
    <source>
        <strain>GB-M1</strain>
    </source>
</reference>
<reference key="2">
    <citation type="journal article" date="2009" name="BMC Genomics">
        <title>Identification of transcriptional signals in Encephalitozoon cuniculi widespread among Microsporidia phylum: support for accurate structural genome annotation.</title>
        <authorList>
            <person name="Peyretaillade E."/>
            <person name="Goncalves O."/>
            <person name="Terrat S."/>
            <person name="Dugat-Bony E."/>
            <person name="Wincker P."/>
            <person name="Cornman R.S."/>
            <person name="Evans J.D."/>
            <person name="Delbac F."/>
            <person name="Peyret P."/>
        </authorList>
    </citation>
    <scope>GENOME REANNOTATION</scope>
    <source>
        <strain>GB-M1</strain>
    </source>
</reference>
<proteinExistence type="inferred from homology"/>
<sequence>MRFVGLVNRIFRHSDSMTGRPGQQLASGARARIQGMTSFLSAEEKRKEEEMLRKIKEHGLKLCTKEKQEEMTKAQAGVRCMCTHLGKRGG</sequence>
<accession>Q8SVP4</accession>